<feature type="chain" id="PRO_0000413505" description="Large ribosomal subunit protein eL21">
    <location>
        <begin position="1"/>
        <end position="157"/>
    </location>
</feature>
<feature type="region of interest" description="Disordered" evidence="1">
    <location>
        <begin position="110"/>
        <end position="132"/>
    </location>
</feature>
<name>RL21_TETTS</name>
<keyword id="KW-0002">3D-structure</keyword>
<keyword id="KW-1185">Reference proteome</keyword>
<keyword id="KW-0687">Ribonucleoprotein</keyword>
<keyword id="KW-0689">Ribosomal protein</keyword>
<accession>Q23TC8</accession>
<proteinExistence type="evidence at protein level"/>
<protein>
    <recommendedName>
        <fullName evidence="2">Large ribosomal subunit protein eL21</fullName>
    </recommendedName>
    <alternativeName>
        <fullName>60S ribosomal protein L21</fullName>
    </alternativeName>
</protein>
<organism>
    <name type="scientific">Tetrahymena thermophila (strain SB210)</name>
    <dbReference type="NCBI Taxonomy" id="312017"/>
    <lineage>
        <taxon>Eukaryota</taxon>
        <taxon>Sar</taxon>
        <taxon>Alveolata</taxon>
        <taxon>Ciliophora</taxon>
        <taxon>Intramacronucleata</taxon>
        <taxon>Oligohymenophorea</taxon>
        <taxon>Hymenostomatida</taxon>
        <taxon>Tetrahymenina</taxon>
        <taxon>Tetrahymenidae</taxon>
        <taxon>Tetrahymena</taxon>
    </lineage>
</organism>
<reference key="1">
    <citation type="journal article" date="2006" name="PLoS Biol.">
        <title>Macronuclear genome sequence of the ciliate Tetrahymena thermophila, a model eukaryote.</title>
        <authorList>
            <person name="Eisen J.A."/>
            <person name="Coyne R.S."/>
            <person name="Wu M."/>
            <person name="Wu D."/>
            <person name="Thiagarajan M."/>
            <person name="Wortman J.R."/>
            <person name="Badger J.H."/>
            <person name="Ren Q."/>
            <person name="Amedeo P."/>
            <person name="Jones K.M."/>
            <person name="Tallon L.J."/>
            <person name="Delcher A.L."/>
            <person name="Salzberg S.L."/>
            <person name="Silva J.C."/>
            <person name="Haas B.J."/>
            <person name="Majoros W.H."/>
            <person name="Farzad M."/>
            <person name="Carlton J.M."/>
            <person name="Smith R.K. Jr."/>
            <person name="Garg J."/>
            <person name="Pearlman R.E."/>
            <person name="Karrer K.M."/>
            <person name="Sun L."/>
            <person name="Manning G."/>
            <person name="Elde N.C."/>
            <person name="Turkewitz A.P."/>
            <person name="Asai D.J."/>
            <person name="Wilkes D.E."/>
            <person name="Wang Y."/>
            <person name="Cai H."/>
            <person name="Collins K."/>
            <person name="Stewart B.A."/>
            <person name="Lee S.R."/>
            <person name="Wilamowska K."/>
            <person name="Weinberg Z."/>
            <person name="Ruzzo W.L."/>
            <person name="Wloga D."/>
            <person name="Gaertig J."/>
            <person name="Frankel J."/>
            <person name="Tsao C.-C."/>
            <person name="Gorovsky M.A."/>
            <person name="Keeling P.J."/>
            <person name="Waller R.F."/>
            <person name="Patron N.J."/>
            <person name="Cherry J.M."/>
            <person name="Stover N.A."/>
            <person name="Krieger C.J."/>
            <person name="del Toro C."/>
            <person name="Ryder H.F."/>
            <person name="Williamson S.C."/>
            <person name="Barbeau R.A."/>
            <person name="Hamilton E.P."/>
            <person name="Orias E."/>
        </authorList>
    </citation>
    <scope>NUCLEOTIDE SEQUENCE [LARGE SCALE GENOMIC DNA]</scope>
    <source>
        <strain>SB210</strain>
    </source>
</reference>
<dbReference type="EMBL" id="GG662636">
    <property type="protein sequence ID" value="EAR99778.3"/>
    <property type="molecule type" value="Genomic_DNA"/>
</dbReference>
<dbReference type="RefSeq" id="XP_001020023.3">
    <property type="nucleotide sequence ID" value="XM_001020023.3"/>
</dbReference>
<dbReference type="PDB" id="4V8P">
    <property type="method" value="X-ray"/>
    <property type="resolution" value="3.52 A"/>
    <property type="chains" value="BP/CP/EP/GP=1-157"/>
</dbReference>
<dbReference type="PDBsum" id="4V8P"/>
<dbReference type="SMR" id="Q23TC8"/>
<dbReference type="FunCoup" id="Q23TC8">
    <property type="interactions" value="451"/>
</dbReference>
<dbReference type="IntAct" id="Q23TC8">
    <property type="interactions" value="1"/>
</dbReference>
<dbReference type="STRING" id="312017.Q23TC8"/>
<dbReference type="EnsemblProtists" id="EAR99778">
    <property type="protein sequence ID" value="EAR99778"/>
    <property type="gene ID" value="TTHERM_00666540"/>
</dbReference>
<dbReference type="GeneID" id="7842494"/>
<dbReference type="KEGG" id="tet:TTHERM_00666540"/>
<dbReference type="eggNOG" id="KOG1732">
    <property type="taxonomic scope" value="Eukaryota"/>
</dbReference>
<dbReference type="HOGENOM" id="CLU_103610_0_1_1"/>
<dbReference type="InParanoid" id="Q23TC8"/>
<dbReference type="OMA" id="INYGDYV"/>
<dbReference type="OrthoDB" id="307981at2759"/>
<dbReference type="Proteomes" id="UP000009168">
    <property type="component" value="Unassembled WGS sequence"/>
</dbReference>
<dbReference type="GO" id="GO:1990904">
    <property type="term" value="C:ribonucleoprotein complex"/>
    <property type="evidence" value="ECO:0007669"/>
    <property type="project" value="UniProtKB-KW"/>
</dbReference>
<dbReference type="GO" id="GO:0005840">
    <property type="term" value="C:ribosome"/>
    <property type="evidence" value="ECO:0007669"/>
    <property type="project" value="UniProtKB-KW"/>
</dbReference>
<dbReference type="GO" id="GO:0003735">
    <property type="term" value="F:structural constituent of ribosome"/>
    <property type="evidence" value="ECO:0007669"/>
    <property type="project" value="InterPro"/>
</dbReference>
<dbReference type="GO" id="GO:0006412">
    <property type="term" value="P:translation"/>
    <property type="evidence" value="ECO:0007669"/>
    <property type="project" value="InterPro"/>
</dbReference>
<dbReference type="FunFam" id="2.30.30.70:FF:000001">
    <property type="entry name" value="60S ribosomal protein L21"/>
    <property type="match status" value="1"/>
</dbReference>
<dbReference type="Gene3D" id="6.10.250.3260">
    <property type="match status" value="1"/>
</dbReference>
<dbReference type="Gene3D" id="2.30.30.70">
    <property type="entry name" value="Ribosomal protein L21"/>
    <property type="match status" value="1"/>
</dbReference>
<dbReference type="InterPro" id="IPR001147">
    <property type="entry name" value="Ribosomal_eL21"/>
</dbReference>
<dbReference type="InterPro" id="IPR018259">
    <property type="entry name" value="Ribosomal_eL21_CS"/>
</dbReference>
<dbReference type="InterPro" id="IPR036948">
    <property type="entry name" value="Ribosomal_eL21_sf"/>
</dbReference>
<dbReference type="InterPro" id="IPR008991">
    <property type="entry name" value="Translation_prot_SH3-like_sf"/>
</dbReference>
<dbReference type="PANTHER" id="PTHR20981">
    <property type="entry name" value="60S RIBOSOMAL PROTEIN L21"/>
    <property type="match status" value="1"/>
</dbReference>
<dbReference type="Pfam" id="PF01157">
    <property type="entry name" value="Ribosomal_L21e"/>
    <property type="match status" value="1"/>
</dbReference>
<dbReference type="SUPFAM" id="SSF50104">
    <property type="entry name" value="Translation proteins SH3-like domain"/>
    <property type="match status" value="1"/>
</dbReference>
<dbReference type="PROSITE" id="PS01171">
    <property type="entry name" value="RIBOSOMAL_L21E"/>
    <property type="match status" value="1"/>
</dbReference>
<comment type="similarity">
    <text evidence="2">Belongs to the eukaryotic ribosomal protein eL21 family.</text>
</comment>
<evidence type="ECO:0000256" key="1">
    <source>
        <dbReference type="SAM" id="MobiDB-lite"/>
    </source>
</evidence>
<evidence type="ECO:0000305" key="2"/>
<sequence length="157" mass="18123">MTHSYGYRRQTRKKFAKAYKTKGHVRISRYLTTYKVGEYVDIMVDGSQHKGMPYKLYHGRTGKVFNVNPRSIGVIVHRIVNGRYIEKRLHVKIEHVRPSNVKTALSKRYQANDQAKAEGNKAGKRVSTKRNPGQPLEAVQVQGAVNFQHPKVFREIF</sequence>
<gene>
    <name type="primary">RPL21</name>
    <name type="ORF">TTHERM_00666540</name>
</gene>